<protein>
    <recommendedName>
        <fullName evidence="1">Small ribosomal subunit protein uS4</fullName>
    </recommendedName>
    <alternativeName>
        <fullName evidence="2">30S ribosomal protein S4</fullName>
    </alternativeName>
</protein>
<proteinExistence type="inferred from homology"/>
<sequence>MARYLGADCKLCRREKMKLFLKGSKCESPKCPIEERPYPPGEHGRTRAKESEYLLQLREKQKCARIYGVLEKQFRRYYEEASRKTGRTGENLLRILESRLDNVVYRAGFAASRDQARQLVRHGHFLVNGRRVDIPSYRVSENDVIEVAEKSRELTPFVIARAVAGERTVPPWLEVIPNRLRILVHSLPSRQVIDTPVQEQLIVEFYSK</sequence>
<reference key="1">
    <citation type="journal article" date="2009" name="Genome Res.">
        <title>Complete genome of the cellulolytic thermophile Acidothermus cellulolyticus 11B provides insights into its ecophysiological and evolutionary adaptations.</title>
        <authorList>
            <person name="Barabote R.D."/>
            <person name="Xie G."/>
            <person name="Leu D.H."/>
            <person name="Normand P."/>
            <person name="Necsulea A."/>
            <person name="Daubin V."/>
            <person name="Medigue C."/>
            <person name="Adney W.S."/>
            <person name="Xu X.C."/>
            <person name="Lapidus A."/>
            <person name="Parales R.E."/>
            <person name="Detter C."/>
            <person name="Pujic P."/>
            <person name="Bruce D."/>
            <person name="Lavire C."/>
            <person name="Challacombe J.F."/>
            <person name="Brettin T.S."/>
            <person name="Berry A.M."/>
        </authorList>
    </citation>
    <scope>NUCLEOTIDE SEQUENCE [LARGE SCALE GENOMIC DNA]</scope>
    <source>
        <strain>ATCC 43068 / DSM 8971 / 11B</strain>
    </source>
</reference>
<accession>A0LRP7</accession>
<gene>
    <name evidence="1" type="primary">rpsD</name>
    <name type="ordered locus">Acel_0333</name>
</gene>
<dbReference type="EMBL" id="CP000481">
    <property type="protein sequence ID" value="ABK52107.1"/>
    <property type="molecule type" value="Genomic_DNA"/>
</dbReference>
<dbReference type="RefSeq" id="WP_011719170.1">
    <property type="nucleotide sequence ID" value="NC_008578.1"/>
</dbReference>
<dbReference type="SMR" id="A0LRP7"/>
<dbReference type="FunCoup" id="A0LRP7">
    <property type="interactions" value="263"/>
</dbReference>
<dbReference type="STRING" id="351607.Acel_0333"/>
<dbReference type="KEGG" id="ace:Acel_0333"/>
<dbReference type="eggNOG" id="COG0522">
    <property type="taxonomic scope" value="Bacteria"/>
</dbReference>
<dbReference type="HOGENOM" id="CLU_092403_0_2_11"/>
<dbReference type="InParanoid" id="A0LRP7"/>
<dbReference type="OrthoDB" id="9803672at2"/>
<dbReference type="Proteomes" id="UP000008221">
    <property type="component" value="Chromosome"/>
</dbReference>
<dbReference type="GO" id="GO:0015935">
    <property type="term" value="C:small ribosomal subunit"/>
    <property type="evidence" value="ECO:0007669"/>
    <property type="project" value="InterPro"/>
</dbReference>
<dbReference type="GO" id="GO:0019843">
    <property type="term" value="F:rRNA binding"/>
    <property type="evidence" value="ECO:0007669"/>
    <property type="project" value="UniProtKB-UniRule"/>
</dbReference>
<dbReference type="GO" id="GO:0003735">
    <property type="term" value="F:structural constituent of ribosome"/>
    <property type="evidence" value="ECO:0007669"/>
    <property type="project" value="InterPro"/>
</dbReference>
<dbReference type="GO" id="GO:0042274">
    <property type="term" value="P:ribosomal small subunit biogenesis"/>
    <property type="evidence" value="ECO:0007669"/>
    <property type="project" value="TreeGrafter"/>
</dbReference>
<dbReference type="GO" id="GO:0006412">
    <property type="term" value="P:translation"/>
    <property type="evidence" value="ECO:0007669"/>
    <property type="project" value="UniProtKB-UniRule"/>
</dbReference>
<dbReference type="CDD" id="cd00165">
    <property type="entry name" value="S4"/>
    <property type="match status" value="1"/>
</dbReference>
<dbReference type="FunFam" id="1.10.1050.10:FF:000001">
    <property type="entry name" value="30S ribosomal protein S4"/>
    <property type="match status" value="1"/>
</dbReference>
<dbReference type="FunFam" id="3.10.290.10:FF:000001">
    <property type="entry name" value="30S ribosomal protein S4"/>
    <property type="match status" value="1"/>
</dbReference>
<dbReference type="Gene3D" id="1.10.1050.10">
    <property type="entry name" value="Ribosomal Protein S4 Delta 41, Chain A, domain 1"/>
    <property type="match status" value="1"/>
</dbReference>
<dbReference type="Gene3D" id="3.10.290.10">
    <property type="entry name" value="RNA-binding S4 domain"/>
    <property type="match status" value="1"/>
</dbReference>
<dbReference type="HAMAP" id="MF_01306_B">
    <property type="entry name" value="Ribosomal_uS4_B"/>
    <property type="match status" value="1"/>
</dbReference>
<dbReference type="InterPro" id="IPR022801">
    <property type="entry name" value="Ribosomal_uS4"/>
</dbReference>
<dbReference type="InterPro" id="IPR005709">
    <property type="entry name" value="Ribosomal_uS4_bac-type"/>
</dbReference>
<dbReference type="InterPro" id="IPR018079">
    <property type="entry name" value="Ribosomal_uS4_CS"/>
</dbReference>
<dbReference type="InterPro" id="IPR001912">
    <property type="entry name" value="Ribosomal_uS4_N"/>
</dbReference>
<dbReference type="InterPro" id="IPR002942">
    <property type="entry name" value="S4_RNA-bd"/>
</dbReference>
<dbReference type="InterPro" id="IPR036986">
    <property type="entry name" value="S4_RNA-bd_sf"/>
</dbReference>
<dbReference type="NCBIfam" id="NF003717">
    <property type="entry name" value="PRK05327.1"/>
    <property type="match status" value="1"/>
</dbReference>
<dbReference type="NCBIfam" id="TIGR01017">
    <property type="entry name" value="rpsD_bact"/>
    <property type="match status" value="1"/>
</dbReference>
<dbReference type="PANTHER" id="PTHR11831">
    <property type="entry name" value="30S 40S RIBOSOMAL PROTEIN"/>
    <property type="match status" value="1"/>
</dbReference>
<dbReference type="PANTHER" id="PTHR11831:SF4">
    <property type="entry name" value="SMALL RIBOSOMAL SUBUNIT PROTEIN US4M"/>
    <property type="match status" value="1"/>
</dbReference>
<dbReference type="Pfam" id="PF00163">
    <property type="entry name" value="Ribosomal_S4"/>
    <property type="match status" value="1"/>
</dbReference>
<dbReference type="Pfam" id="PF01479">
    <property type="entry name" value="S4"/>
    <property type="match status" value="1"/>
</dbReference>
<dbReference type="SMART" id="SM01390">
    <property type="entry name" value="Ribosomal_S4"/>
    <property type="match status" value="1"/>
</dbReference>
<dbReference type="SMART" id="SM00363">
    <property type="entry name" value="S4"/>
    <property type="match status" value="1"/>
</dbReference>
<dbReference type="SUPFAM" id="SSF55174">
    <property type="entry name" value="Alpha-L RNA-binding motif"/>
    <property type="match status" value="1"/>
</dbReference>
<dbReference type="PROSITE" id="PS00632">
    <property type="entry name" value="RIBOSOMAL_S4"/>
    <property type="match status" value="1"/>
</dbReference>
<dbReference type="PROSITE" id="PS50889">
    <property type="entry name" value="S4"/>
    <property type="match status" value="1"/>
</dbReference>
<organism>
    <name type="scientific">Acidothermus cellulolyticus (strain ATCC 43068 / DSM 8971 / 11B)</name>
    <dbReference type="NCBI Taxonomy" id="351607"/>
    <lineage>
        <taxon>Bacteria</taxon>
        <taxon>Bacillati</taxon>
        <taxon>Actinomycetota</taxon>
        <taxon>Actinomycetes</taxon>
        <taxon>Acidothermales</taxon>
        <taxon>Acidothermaceae</taxon>
        <taxon>Acidothermus</taxon>
    </lineage>
</organism>
<comment type="function">
    <text evidence="1">One of the primary rRNA binding proteins, it binds directly to 16S rRNA where it nucleates assembly of the body of the 30S subunit.</text>
</comment>
<comment type="function">
    <text evidence="1">With S5 and S12 plays an important role in translational accuracy.</text>
</comment>
<comment type="subunit">
    <text evidence="1">Part of the 30S ribosomal subunit. Contacts protein S5. The interaction surface between S4 and S5 is involved in control of translational fidelity.</text>
</comment>
<comment type="similarity">
    <text evidence="1">Belongs to the universal ribosomal protein uS4 family.</text>
</comment>
<name>RS4_ACIC1</name>
<feature type="chain" id="PRO_0000293225" description="Small ribosomal subunit protein uS4">
    <location>
        <begin position="1"/>
        <end position="208"/>
    </location>
</feature>
<feature type="domain" description="S4 RNA-binding" evidence="1">
    <location>
        <begin position="98"/>
        <end position="163"/>
    </location>
</feature>
<evidence type="ECO:0000255" key="1">
    <source>
        <dbReference type="HAMAP-Rule" id="MF_01306"/>
    </source>
</evidence>
<evidence type="ECO:0000305" key="2"/>
<keyword id="KW-1185">Reference proteome</keyword>
<keyword id="KW-0687">Ribonucleoprotein</keyword>
<keyword id="KW-0689">Ribosomal protein</keyword>
<keyword id="KW-0694">RNA-binding</keyword>
<keyword id="KW-0699">rRNA-binding</keyword>